<dbReference type="EC" id="2.6.1.16" evidence="1"/>
<dbReference type="EMBL" id="AF058788">
    <property type="protein sequence ID" value="AAC14295.1"/>
    <property type="molecule type" value="Genomic_DNA"/>
</dbReference>
<dbReference type="EMBL" id="CP000480">
    <property type="protein sequence ID" value="ABK71697.1"/>
    <property type="molecule type" value="Genomic_DNA"/>
</dbReference>
<dbReference type="EMBL" id="CP001663">
    <property type="protein sequence ID" value="AFP38004.1"/>
    <property type="molecule type" value="Genomic_DNA"/>
</dbReference>
<dbReference type="RefSeq" id="WP_003892956.1">
    <property type="nucleotide sequence ID" value="NZ_SIJM01000016.1"/>
</dbReference>
<dbReference type="RefSeq" id="YP_885947.1">
    <property type="nucleotide sequence ID" value="NC_008596.1"/>
</dbReference>
<dbReference type="SMR" id="O68956"/>
<dbReference type="STRING" id="246196.MSMEG_1568"/>
<dbReference type="PaxDb" id="246196-MSMEI_1531"/>
<dbReference type="GeneID" id="93456408"/>
<dbReference type="KEGG" id="msb:LJ00_07835"/>
<dbReference type="KEGG" id="msg:MSMEI_1531"/>
<dbReference type="KEGG" id="msm:MSMEG_1568"/>
<dbReference type="PATRIC" id="fig|246196.19.peg.1555"/>
<dbReference type="eggNOG" id="COG0449">
    <property type="taxonomic scope" value="Bacteria"/>
</dbReference>
<dbReference type="OrthoDB" id="9761808at2"/>
<dbReference type="Proteomes" id="UP000000757">
    <property type="component" value="Chromosome"/>
</dbReference>
<dbReference type="Proteomes" id="UP000006158">
    <property type="component" value="Chromosome"/>
</dbReference>
<dbReference type="GO" id="GO:0005829">
    <property type="term" value="C:cytosol"/>
    <property type="evidence" value="ECO:0007669"/>
    <property type="project" value="TreeGrafter"/>
</dbReference>
<dbReference type="GO" id="GO:0097367">
    <property type="term" value="F:carbohydrate derivative binding"/>
    <property type="evidence" value="ECO:0007669"/>
    <property type="project" value="InterPro"/>
</dbReference>
<dbReference type="GO" id="GO:0004360">
    <property type="term" value="F:glutamine-fructose-6-phosphate transaminase (isomerizing) activity"/>
    <property type="evidence" value="ECO:0007669"/>
    <property type="project" value="UniProtKB-UniRule"/>
</dbReference>
<dbReference type="GO" id="GO:0005975">
    <property type="term" value="P:carbohydrate metabolic process"/>
    <property type="evidence" value="ECO:0007669"/>
    <property type="project" value="UniProtKB-UniRule"/>
</dbReference>
<dbReference type="GO" id="GO:0006002">
    <property type="term" value="P:fructose 6-phosphate metabolic process"/>
    <property type="evidence" value="ECO:0007669"/>
    <property type="project" value="TreeGrafter"/>
</dbReference>
<dbReference type="GO" id="GO:0006487">
    <property type="term" value="P:protein N-linked glycosylation"/>
    <property type="evidence" value="ECO:0007669"/>
    <property type="project" value="TreeGrafter"/>
</dbReference>
<dbReference type="GO" id="GO:0006047">
    <property type="term" value="P:UDP-N-acetylglucosamine metabolic process"/>
    <property type="evidence" value="ECO:0007669"/>
    <property type="project" value="TreeGrafter"/>
</dbReference>
<dbReference type="CDD" id="cd00714">
    <property type="entry name" value="GFAT"/>
    <property type="match status" value="1"/>
</dbReference>
<dbReference type="CDD" id="cd05008">
    <property type="entry name" value="SIS_GlmS_GlmD_1"/>
    <property type="match status" value="1"/>
</dbReference>
<dbReference type="CDD" id="cd05009">
    <property type="entry name" value="SIS_GlmS_GlmD_2"/>
    <property type="match status" value="1"/>
</dbReference>
<dbReference type="FunFam" id="3.40.50.10490:FF:000001">
    <property type="entry name" value="Glutamine--fructose-6-phosphate aminotransferase [isomerizing]"/>
    <property type="match status" value="1"/>
</dbReference>
<dbReference type="FunFam" id="3.40.50.10490:FF:000002">
    <property type="entry name" value="Glutamine--fructose-6-phosphate aminotransferase [isomerizing]"/>
    <property type="match status" value="1"/>
</dbReference>
<dbReference type="FunFam" id="3.60.20.10:FF:000006">
    <property type="entry name" value="Glutamine--fructose-6-phosphate aminotransferase [isomerizing]"/>
    <property type="match status" value="1"/>
</dbReference>
<dbReference type="Gene3D" id="3.40.50.10490">
    <property type="entry name" value="Glucose-6-phosphate isomerase like protein, domain 1"/>
    <property type="match status" value="2"/>
</dbReference>
<dbReference type="Gene3D" id="3.60.20.10">
    <property type="entry name" value="Glutamine Phosphoribosylpyrophosphate, subunit 1, domain 1"/>
    <property type="match status" value="1"/>
</dbReference>
<dbReference type="HAMAP" id="MF_00164">
    <property type="entry name" value="GlmS"/>
    <property type="match status" value="1"/>
</dbReference>
<dbReference type="InterPro" id="IPR017932">
    <property type="entry name" value="GATase_2_dom"/>
</dbReference>
<dbReference type="InterPro" id="IPR005855">
    <property type="entry name" value="GFAT"/>
</dbReference>
<dbReference type="InterPro" id="IPR047084">
    <property type="entry name" value="GFAT_N"/>
</dbReference>
<dbReference type="InterPro" id="IPR035466">
    <property type="entry name" value="GlmS/AgaS_SIS"/>
</dbReference>
<dbReference type="InterPro" id="IPR035490">
    <property type="entry name" value="GlmS/FrlB_SIS"/>
</dbReference>
<dbReference type="InterPro" id="IPR029055">
    <property type="entry name" value="Ntn_hydrolases_N"/>
</dbReference>
<dbReference type="InterPro" id="IPR001347">
    <property type="entry name" value="SIS_dom"/>
</dbReference>
<dbReference type="InterPro" id="IPR046348">
    <property type="entry name" value="SIS_dom_sf"/>
</dbReference>
<dbReference type="NCBIfam" id="TIGR01135">
    <property type="entry name" value="glmS"/>
    <property type="match status" value="1"/>
</dbReference>
<dbReference type="NCBIfam" id="NF001484">
    <property type="entry name" value="PRK00331.1"/>
    <property type="match status" value="1"/>
</dbReference>
<dbReference type="PANTHER" id="PTHR10937">
    <property type="entry name" value="GLUCOSAMINE--FRUCTOSE-6-PHOSPHATE AMINOTRANSFERASE, ISOMERIZING"/>
    <property type="match status" value="1"/>
</dbReference>
<dbReference type="PANTHER" id="PTHR10937:SF0">
    <property type="entry name" value="GLUTAMINE--FRUCTOSE-6-PHOSPHATE TRANSAMINASE (ISOMERIZING)"/>
    <property type="match status" value="1"/>
</dbReference>
<dbReference type="Pfam" id="PF13522">
    <property type="entry name" value="GATase_6"/>
    <property type="match status" value="1"/>
</dbReference>
<dbReference type="Pfam" id="PF01380">
    <property type="entry name" value="SIS"/>
    <property type="match status" value="2"/>
</dbReference>
<dbReference type="SUPFAM" id="SSF56235">
    <property type="entry name" value="N-terminal nucleophile aminohydrolases (Ntn hydrolases)"/>
    <property type="match status" value="1"/>
</dbReference>
<dbReference type="SUPFAM" id="SSF53697">
    <property type="entry name" value="SIS domain"/>
    <property type="match status" value="1"/>
</dbReference>
<dbReference type="PROSITE" id="PS51278">
    <property type="entry name" value="GATASE_TYPE_2"/>
    <property type="match status" value="1"/>
</dbReference>
<dbReference type="PROSITE" id="PS51464">
    <property type="entry name" value="SIS"/>
    <property type="match status" value="2"/>
</dbReference>
<proteinExistence type="inferred from homology"/>
<name>GLMS_MYCS2</name>
<reference key="1">
    <citation type="submission" date="1998-04" db="EMBL/GenBank/DDBJ databases">
        <title>Biochemical and genetic definition of effects of mannosamine on mycobacteria.</title>
        <authorList>
            <person name="Schaeffer M.L."/>
            <person name="Besra G.S."/>
            <person name="Belisle J.T."/>
            <person name="Inamine J.M."/>
        </authorList>
    </citation>
    <scope>NUCLEOTIDE SEQUENCE [GENOMIC DNA]</scope>
</reference>
<reference key="2">
    <citation type="submission" date="2006-10" db="EMBL/GenBank/DDBJ databases">
        <authorList>
            <person name="Fleischmann R.D."/>
            <person name="Dodson R.J."/>
            <person name="Haft D.H."/>
            <person name="Merkel J.S."/>
            <person name="Nelson W.C."/>
            <person name="Fraser C.M."/>
        </authorList>
    </citation>
    <scope>NUCLEOTIDE SEQUENCE [LARGE SCALE GENOMIC DNA]</scope>
    <source>
        <strain>ATCC 700084 / mc(2)155</strain>
    </source>
</reference>
<reference key="3">
    <citation type="journal article" date="2007" name="Genome Biol.">
        <title>Interrupted coding sequences in Mycobacterium smegmatis: authentic mutations or sequencing errors?</title>
        <authorList>
            <person name="Deshayes C."/>
            <person name="Perrodou E."/>
            <person name="Gallien S."/>
            <person name="Euphrasie D."/>
            <person name="Schaeffer C."/>
            <person name="Van-Dorsselaer A."/>
            <person name="Poch O."/>
            <person name="Lecompte O."/>
            <person name="Reyrat J.-M."/>
        </authorList>
    </citation>
    <scope>NUCLEOTIDE SEQUENCE [LARGE SCALE GENOMIC DNA]</scope>
    <source>
        <strain>ATCC 700084 / mc(2)155</strain>
    </source>
</reference>
<reference key="4">
    <citation type="journal article" date="2009" name="Genome Res.">
        <title>Ortho-proteogenomics: multiple proteomes investigation through orthology and a new MS-based protocol.</title>
        <authorList>
            <person name="Gallien S."/>
            <person name="Perrodou E."/>
            <person name="Carapito C."/>
            <person name="Deshayes C."/>
            <person name="Reyrat J.-M."/>
            <person name="Van Dorsselaer A."/>
            <person name="Poch O."/>
            <person name="Schaeffer C."/>
            <person name="Lecompte O."/>
        </authorList>
    </citation>
    <scope>NUCLEOTIDE SEQUENCE [LARGE SCALE GENOMIC DNA]</scope>
    <source>
        <strain>ATCC 700084 / mc(2)155</strain>
    </source>
</reference>
<accession>O68956</accession>
<accession>A0QSQ9</accession>
<accession>I7G5X8</accession>
<organism>
    <name type="scientific">Mycolicibacterium smegmatis (strain ATCC 700084 / mc(2)155)</name>
    <name type="common">Mycobacterium smegmatis</name>
    <dbReference type="NCBI Taxonomy" id="246196"/>
    <lineage>
        <taxon>Bacteria</taxon>
        <taxon>Bacillati</taxon>
        <taxon>Actinomycetota</taxon>
        <taxon>Actinomycetes</taxon>
        <taxon>Mycobacteriales</taxon>
        <taxon>Mycobacteriaceae</taxon>
        <taxon>Mycolicibacterium</taxon>
    </lineage>
</organism>
<feature type="initiator methionine" description="Removed" evidence="1">
    <location>
        <position position="1"/>
    </location>
</feature>
<feature type="chain" id="PRO_0000135356" description="Glutamine--fructose-6-phosphate aminotransferase [isomerizing]">
    <location>
        <begin position="2"/>
        <end position="628"/>
    </location>
</feature>
<feature type="domain" description="Glutamine amidotransferase type-2" evidence="1">
    <location>
        <begin position="2"/>
        <end position="229"/>
    </location>
</feature>
<feature type="domain" description="SIS 1" evidence="1">
    <location>
        <begin position="301"/>
        <end position="440"/>
    </location>
</feature>
<feature type="domain" description="SIS 2" evidence="1">
    <location>
        <begin position="473"/>
        <end position="618"/>
    </location>
</feature>
<feature type="region of interest" description="Disordered" evidence="2">
    <location>
        <begin position="61"/>
        <end position="94"/>
    </location>
</feature>
<feature type="active site" description="Nucleophile; for GATase activity" evidence="1">
    <location>
        <position position="2"/>
    </location>
</feature>
<feature type="active site" description="For Fru-6P isomerization activity" evidence="1">
    <location>
        <position position="623"/>
    </location>
</feature>
<gene>
    <name evidence="1" type="primary">glmS</name>
    <name type="ordered locus">MSMEG_1568</name>
    <name type="ordered locus">MSMEI_1531</name>
</gene>
<protein>
    <recommendedName>
        <fullName evidence="1">Glutamine--fructose-6-phosphate aminotransferase [isomerizing]</fullName>
        <ecNumber evidence="1">2.6.1.16</ecNumber>
    </recommendedName>
    <alternativeName>
        <fullName evidence="1">D-fructose-6-phosphate amidotransferase</fullName>
    </alternativeName>
    <alternativeName>
        <fullName evidence="1">GFAT</fullName>
    </alternativeName>
    <alternativeName>
        <fullName evidence="1">Glucosamine-6-phosphate synthase</fullName>
    </alternativeName>
    <alternativeName>
        <fullName evidence="1">Hexosephosphate aminotransferase</fullName>
    </alternativeName>
    <alternativeName>
        <fullName evidence="1">L-glutamine--D-fructose-6-phosphate amidotransferase</fullName>
    </alternativeName>
</protein>
<sequence>MCGIVGYVGHRPARDIVVDALRRMEYRGYDSAGIALIDGNGGLTVRRRAGRLANLEATLAETDSNDGDGLGGSTGLGHTRWATHGRPTDRNAHPHRDAAGKIAVVHNGIIENFAPLRAELEAAGVEFASDTDTEVAVHLVARQYTQGDTAGDFPASVLAVLQRLEGHFTLVFASADDPGTIVAARRSTPLVLGIGDGEMFVGSDVAAFIEHTRDAVELGQDQAVVLTADGYRITDFAGNDHLEAGRDFREFHIDWDLNAAEKGGYDYFMLKEIAEQPSAVADTLLGHFDKNRIVLDEQRLSDQELREIDKVFIVACGTAYHSGLLAKYAIEHWTRLPVEVELASEFRYRDPVLDRSTLVIAISQSGETADTLEAVRHAKTQKAKVLAICNTNGSQIPREADAVLYTRAGPEIGVAATKTFLAQIAANYLVGLALAQARGTKYPDEVAREYRELEAMPDLIKRVLAGMDSVAALAERFAPSSTVLFLGRHVGYPVALEGALKLKELAYMHAEGFAAGELKHGPIALIDENLPVIVVMPSPKNAAMLHAKLLSNIREIQARGAVTVVIAEEDDDTVRPYADHLIEIPSVSTLFQPLLSTIPLQVFAAGVARARGYDVDKPRNLAKSVTVE</sequence>
<keyword id="KW-0032">Aminotransferase</keyword>
<keyword id="KW-0963">Cytoplasm</keyword>
<keyword id="KW-0315">Glutamine amidotransferase</keyword>
<keyword id="KW-1185">Reference proteome</keyword>
<keyword id="KW-0677">Repeat</keyword>
<keyword id="KW-0808">Transferase</keyword>
<evidence type="ECO:0000255" key="1">
    <source>
        <dbReference type="HAMAP-Rule" id="MF_00164"/>
    </source>
</evidence>
<evidence type="ECO:0000256" key="2">
    <source>
        <dbReference type="SAM" id="MobiDB-lite"/>
    </source>
</evidence>
<comment type="function">
    <text evidence="1">Catalyzes the first step in hexosamine metabolism, converting fructose-6P into glucosamine-6P using glutamine as a nitrogen source.</text>
</comment>
<comment type="catalytic activity">
    <reaction evidence="1">
        <text>D-fructose 6-phosphate + L-glutamine = D-glucosamine 6-phosphate + L-glutamate</text>
        <dbReference type="Rhea" id="RHEA:13237"/>
        <dbReference type="ChEBI" id="CHEBI:29985"/>
        <dbReference type="ChEBI" id="CHEBI:58359"/>
        <dbReference type="ChEBI" id="CHEBI:58725"/>
        <dbReference type="ChEBI" id="CHEBI:61527"/>
        <dbReference type="EC" id="2.6.1.16"/>
    </reaction>
</comment>
<comment type="subunit">
    <text evidence="1">Homodimer.</text>
</comment>
<comment type="subcellular location">
    <subcellularLocation>
        <location evidence="1">Cytoplasm</location>
    </subcellularLocation>
</comment>